<comment type="function">
    <text evidence="1">Negatively regulates long-term potentiation and modulates adult synaptic plasticity. Stabilizes the interaction of RTN4 isoform A/Nogo-A with its receptors, inhibiting clustering of postsynaptic AMPA receptors at synaptic sites. Upon neuronal stimulation, degraded at synapses, reducing RTN4 signaling and allowing AMPA receptor clustering at individual synapses.</text>
</comment>
<comment type="subunit">
    <text evidence="1">Interacts with RTN4 isoform A/Nogo-A; the interaction results in enhanced RTN4-mediated inhibition of AMPA receptor clustering. Also interacts with NCAM1, RANBP2 and CCT8.</text>
</comment>
<comment type="interaction">
    <interactant intactId="EBI-7317823">
        <id>Q6P5X5</id>
    </interactant>
    <interactant intactId="EBI-11954519">
        <id>Q49AR9</id>
        <label>ANKS1A</label>
    </interactant>
    <organismsDiffer>false</organismsDiffer>
    <experiments>3</experiments>
</comment>
<comment type="interaction">
    <interactant intactId="EBI-7317823">
        <id>Q6P5X5</id>
    </interactant>
    <interactant intactId="EBI-2117357">
        <id>P15289</id>
        <label>ARSA</label>
    </interactant>
    <organismsDiffer>false</organismsDiffer>
    <experiments>3</experiments>
</comment>
<comment type="interaction">
    <interactant intactId="EBI-7317823">
        <id>Q6P5X5</id>
    </interactant>
    <interactant intactId="EBI-744695">
        <id>Q8N9N5</id>
        <label>BANP</label>
    </interactant>
    <organismsDiffer>false</organismsDiffer>
    <experiments>3</experiments>
</comment>
<comment type="interaction">
    <interactant intactId="EBI-7317823">
        <id>Q6P5X5</id>
    </interactant>
    <interactant intactId="EBI-12011224">
        <id>Q9NPB3</id>
        <label>CABP2</label>
    </interactant>
    <organismsDiffer>false</organismsDiffer>
    <experiments>3</experiments>
</comment>
<comment type="interaction">
    <interactant intactId="EBI-7317823">
        <id>Q6P5X5</id>
    </interactant>
    <interactant intactId="EBI-742887">
        <id>Q8TAP6</id>
        <label>CEP76</label>
    </interactant>
    <organismsDiffer>false</organismsDiffer>
    <experiments>6</experiments>
</comment>
<comment type="interaction">
    <interactant intactId="EBI-7317823">
        <id>Q6P5X5</id>
    </interactant>
    <interactant intactId="EBI-25837549">
        <id>P28329-3</id>
        <label>CHAT</label>
    </interactant>
    <organismsDiffer>false</organismsDiffer>
    <experiments>3</experiments>
</comment>
<comment type="interaction">
    <interactant intactId="EBI-7317823">
        <id>Q6P5X5</id>
    </interactant>
    <interactant intactId="EBI-747133">
        <id>P27658</id>
        <label>COL8A1</label>
    </interactant>
    <organismsDiffer>false</organismsDiffer>
    <experiments>3</experiments>
</comment>
<comment type="interaction">
    <interactant intactId="EBI-7317823">
        <id>Q6P5X5</id>
    </interactant>
    <interactant intactId="EBI-750444">
        <id>P53672</id>
        <label>CRYBA2</label>
    </interactant>
    <organismsDiffer>false</organismsDiffer>
    <experiments>3</experiments>
</comment>
<comment type="interaction">
    <interactant intactId="EBI-7317823">
        <id>Q6P5X5</id>
    </interactant>
    <interactant intactId="EBI-3867333">
        <id>A8MQ03</id>
        <label>CYSRT1</label>
    </interactant>
    <organismsDiffer>false</organismsDiffer>
    <experiments>6</experiments>
</comment>
<comment type="interaction">
    <interactant intactId="EBI-7317823">
        <id>Q6P5X5</id>
    </interactant>
    <interactant intactId="EBI-10976677">
        <id>G5E9A7</id>
        <label>DMWD</label>
    </interactant>
    <organismsDiffer>false</organismsDiffer>
    <experiments>3</experiments>
</comment>
<comment type="interaction">
    <interactant intactId="EBI-7317823">
        <id>Q6P5X5</id>
    </interactant>
    <interactant intactId="EBI-740376">
        <id>Q86UW9</id>
        <label>DTX2</label>
    </interactant>
    <organismsDiffer>false</organismsDiffer>
    <experiments>5</experiments>
</comment>
<comment type="interaction">
    <interactant intactId="EBI-7317823">
        <id>Q6P5X5</id>
    </interactant>
    <interactant intactId="EBI-371922">
        <id>Q96B26</id>
        <label>EXOSC8</label>
    </interactant>
    <organismsDiffer>false</organismsDiffer>
    <experiments>3</experiments>
</comment>
<comment type="interaction">
    <interactant intactId="EBI-7317823">
        <id>Q6P5X5</id>
    </interactant>
    <interactant intactId="EBI-348399">
        <id>P22607</id>
        <label>FGFR3</label>
    </interactant>
    <organismsDiffer>false</organismsDiffer>
    <experiments>3</experiments>
</comment>
<comment type="interaction">
    <interactant intactId="EBI-7317823">
        <id>Q6P5X5</id>
    </interactant>
    <interactant intactId="EBI-725515">
        <id>O43559</id>
        <label>FRS3</label>
    </interactant>
    <organismsDiffer>false</organismsDiffer>
    <experiments>3</experiments>
</comment>
<comment type="interaction">
    <interactant intactId="EBI-7317823">
        <id>Q6P5X5</id>
    </interactant>
    <interactant intactId="EBI-11975289">
        <id>Q9Y223-2</id>
        <label>GNE</label>
    </interactant>
    <organismsDiffer>false</organismsDiffer>
    <experiments>3</experiments>
</comment>
<comment type="interaction">
    <interactant intactId="EBI-7317823">
        <id>Q6P5X5</id>
    </interactant>
    <interactant intactId="EBI-747754">
        <id>P28799</id>
        <label>GRN</label>
    </interactant>
    <organismsDiffer>false</organismsDiffer>
    <experiments>3</experiments>
</comment>
<comment type="interaction">
    <interactant intactId="EBI-7317823">
        <id>Q6P5X5</id>
    </interactant>
    <interactant intactId="EBI-3918847">
        <id>Q9H2F3</id>
        <label>HSD3B7</label>
    </interactant>
    <organismsDiffer>false</organismsDiffer>
    <experiments>3</experiments>
</comment>
<comment type="interaction">
    <interactant intactId="EBI-7317823">
        <id>Q6P5X5</id>
    </interactant>
    <interactant intactId="EBI-713450">
        <id>Q02363</id>
        <label>ID2</label>
    </interactant>
    <organismsDiffer>false</organismsDiffer>
    <experiments>3</experiments>
</comment>
<comment type="interaction">
    <interactant intactId="EBI-7317823">
        <id>Q6P5X5</id>
    </interactant>
    <interactant intactId="EBI-1387094">
        <id>Q02535</id>
        <label>ID3</label>
    </interactant>
    <organismsDiffer>false</organismsDiffer>
    <experiments>3</experiments>
</comment>
<comment type="interaction">
    <interactant intactId="EBI-7317823">
        <id>Q6P5X5</id>
    </interactant>
    <interactant intactId="EBI-6509505">
        <id>Q0VD86</id>
        <label>INCA1</label>
    </interactant>
    <organismsDiffer>false</organismsDiffer>
    <experiments>3</experiments>
</comment>
<comment type="interaction">
    <interactant intactId="EBI-7317823">
        <id>Q6P5X5</id>
    </interactant>
    <interactant intactId="EBI-10217483">
        <id>P60412</id>
        <label>KRTAP10-11</label>
    </interactant>
    <organismsDiffer>false</organismsDiffer>
    <experiments>3</experiments>
</comment>
<comment type="interaction">
    <interactant intactId="EBI-7317823">
        <id>Q6P5X5</id>
    </interactant>
    <interactant intactId="EBI-10171774">
        <id>P60410</id>
        <label>KRTAP10-8</label>
    </interactant>
    <organismsDiffer>false</organismsDiffer>
    <experiments>5</experiments>
</comment>
<comment type="interaction">
    <interactant intactId="EBI-7317823">
        <id>Q6P5X5</id>
    </interactant>
    <interactant intactId="EBI-10172052">
        <id>P60411</id>
        <label>KRTAP10-9</label>
    </interactant>
    <organismsDiffer>false</organismsDiffer>
    <experiments>3</experiments>
</comment>
<comment type="interaction">
    <interactant intactId="EBI-7317823">
        <id>Q6P5X5</id>
    </interactant>
    <interactant intactId="EBI-11953334">
        <id>P60328</id>
        <label>KRTAP12-3</label>
    </interactant>
    <organismsDiffer>false</organismsDiffer>
    <experiments>3</experiments>
</comment>
<comment type="interaction">
    <interactant intactId="EBI-7317823">
        <id>Q6P5X5</id>
    </interactant>
    <interactant intactId="EBI-11953846">
        <id>Q52LG2</id>
        <label>KRTAP13-2</label>
    </interactant>
    <organismsDiffer>false</organismsDiffer>
    <experiments>3</experiments>
</comment>
<comment type="interaction">
    <interactant intactId="EBI-7317823">
        <id>Q6P5X5</id>
    </interactant>
    <interactant intactId="EBI-10250562">
        <id>Q6L8G9</id>
        <label>KRTAP5-6</label>
    </interactant>
    <organismsDiffer>false</organismsDiffer>
    <experiments>3</experiments>
</comment>
<comment type="interaction">
    <interactant intactId="EBI-7317823">
        <id>Q6P5X5</id>
    </interactant>
    <interactant intactId="EBI-1044640">
        <id>Q9BYQ4</id>
        <label>KRTAP9-2</label>
    </interactant>
    <organismsDiffer>false</organismsDiffer>
    <experiments>3</experiments>
</comment>
<comment type="interaction">
    <interactant intactId="EBI-7317823">
        <id>Q6P5X5</id>
    </interactant>
    <interactant intactId="EBI-739552">
        <id>P43364</id>
        <label>MAGEA11</label>
    </interactant>
    <organismsDiffer>false</organismsDiffer>
    <experiments>3</experiments>
</comment>
<comment type="interaction">
    <interactant intactId="EBI-7317823">
        <id>Q6P5X5</id>
    </interactant>
    <interactant intactId="EBI-724076">
        <id>Q99750</id>
        <label>MDFI</label>
    </interactant>
    <organismsDiffer>false</organismsDiffer>
    <experiments>3</experiments>
</comment>
<comment type="interaction">
    <interactant intactId="EBI-7317823">
        <id>Q6P5X5</id>
    </interactant>
    <interactant intactId="EBI-12305293">
        <id>Q8NCF5-2</id>
        <label>NFATC2IP</label>
    </interactant>
    <organismsDiffer>false</organismsDiffer>
    <experiments>5</experiments>
</comment>
<comment type="interaction">
    <interactant intactId="EBI-7317823">
        <id>Q6P5X5</id>
    </interactant>
    <interactant intactId="EBI-11956269">
        <id>Q92824-2</id>
        <label>PCSK5</label>
    </interactant>
    <organismsDiffer>false</organismsDiffer>
    <experiments>3</experiments>
</comment>
<comment type="interaction">
    <interactant intactId="EBI-7317823">
        <id>Q6P5X5</id>
    </interactant>
    <interactant intactId="EBI-357275">
        <id>Q99471</id>
        <label>PFDN5</label>
    </interactant>
    <organismsDiffer>false</organismsDiffer>
    <experiments>3</experiments>
</comment>
<comment type="interaction">
    <interactant intactId="EBI-7317823">
        <id>Q6P5X5</id>
    </interactant>
    <interactant intactId="EBI-750734">
        <id>Q9NRY6</id>
        <label>PLSCR3</label>
    </interactant>
    <organismsDiffer>false</organismsDiffer>
    <experiments>3</experiments>
</comment>
<comment type="interaction">
    <interactant intactId="EBI-7317823">
        <id>Q6P5X5</id>
    </interactant>
    <interactant intactId="EBI-359352">
        <id>P25786</id>
        <label>PSMA1</label>
    </interactant>
    <organismsDiffer>false</organismsDiffer>
    <experiments>3</experiments>
</comment>
<comment type="interaction">
    <interactant intactId="EBI-7317823">
        <id>Q6P5X5</id>
    </interactant>
    <interactant intactId="EBI-740322">
        <id>Q93062</id>
        <label>RBPMS</label>
    </interactant>
    <organismsDiffer>false</organismsDiffer>
    <experiments>3</experiments>
</comment>
<comment type="interaction">
    <interactant intactId="EBI-7317823">
        <id>Q6P5X5</id>
    </interactant>
    <interactant intactId="EBI-10253121">
        <id>Q6P9E2</id>
        <label>RECK</label>
    </interactant>
    <organismsDiffer>false</organismsDiffer>
    <experiments>3</experiments>
</comment>
<comment type="interaction">
    <interactant intactId="EBI-7317823">
        <id>Q6P5X5</id>
    </interactant>
    <interactant intactId="EBI-10182375">
        <id>Q9UFD9</id>
        <label>RIMBP3</label>
    </interactant>
    <organismsDiffer>false</organismsDiffer>
    <experiments>3</experiments>
</comment>
<comment type="interaction">
    <interactant intactId="EBI-7317823">
        <id>Q6P5X5</id>
    </interactant>
    <interactant intactId="EBI-8099743">
        <id>Q86XE0</id>
        <label>SNX32</label>
    </interactant>
    <organismsDiffer>false</organismsDiffer>
    <experiments>3</experiments>
</comment>
<comment type="interaction">
    <interactant intactId="EBI-7317823">
        <id>Q6P5X5</id>
    </interactant>
    <interactant intactId="EBI-5235340">
        <id>Q7Z699</id>
        <label>SPRED1</label>
    </interactant>
    <organismsDiffer>false</organismsDiffer>
    <experiments>3</experiments>
</comment>
<comment type="interaction">
    <interactant intactId="EBI-7317823">
        <id>Q6P5X5</id>
    </interactant>
    <interactant intactId="EBI-949753">
        <id>Q63HR2</id>
        <label>TNS2</label>
    </interactant>
    <organismsDiffer>false</organismsDiffer>
    <experiments>3</experiments>
</comment>
<comment type="interaction">
    <interactant intactId="EBI-7317823">
        <id>Q6P5X5</id>
    </interactant>
    <interactant intactId="EBI-492476">
        <id>Q96RU7</id>
        <label>TRIB3</label>
    </interactant>
    <organismsDiffer>false</organismsDiffer>
    <experiments>3</experiments>
</comment>
<comment type="interaction">
    <interactant intactId="EBI-7317823">
        <id>Q6P5X5</id>
    </interactant>
    <interactant intactId="EBI-11747707">
        <id>B2RUY7</id>
        <label>VWC2L</label>
    </interactant>
    <organismsDiffer>false</organismsDiffer>
    <experiments>5</experiments>
</comment>
<comment type="interaction">
    <interactant intactId="EBI-7317823">
        <id>Q6P5X5</id>
    </interactant>
    <interactant intactId="EBI-4395669">
        <id>Q6ZNG0</id>
        <label>ZNF620</label>
    </interactant>
    <organismsDiffer>false</organismsDiffer>
    <experiments>3</experiments>
</comment>
<comment type="interaction">
    <interactant intactId="EBI-10692329">
        <id>Q6P5X5-2</id>
    </interactant>
    <interactant intactId="EBI-747754">
        <id>P28799</id>
        <label>GRN</label>
    </interactant>
    <organismsDiffer>false</organismsDiffer>
    <experiments>3</experiments>
</comment>
<comment type="interaction">
    <interactant intactId="EBI-10692329">
        <id>Q6P5X5-2</id>
    </interactant>
    <interactant intactId="EBI-466029">
        <id>P42858</id>
        <label>HTT</label>
    </interactant>
    <organismsDiffer>false</organismsDiffer>
    <experiments>3</experiments>
</comment>
<comment type="interaction">
    <interactant intactId="EBI-10692329">
        <id>Q6P5X5-2</id>
    </interactant>
    <interactant intactId="EBI-720609">
        <id>O76024</id>
        <label>WFS1</label>
    </interactant>
    <organismsDiffer>false</organismsDiffer>
    <experiments>3</experiments>
</comment>
<comment type="subcellular location">
    <subcellularLocation>
        <location evidence="1">Synapse</location>
    </subcellularLocation>
    <subcellularLocation>
        <location evidence="1">Synaptic cleft</location>
    </subcellularLocation>
    <text evidence="1">Detected in both the presynaptic and postsynaptic regions of the synapse and is secreted from neurons into the synaptic cleft. May be released by neuronal dense core vesicles which mediate the release of cleaved neuropeptides.</text>
</comment>
<comment type="alternative products">
    <event type="alternative splicing"/>
    <isoform>
        <id>Q6P5X5-1</id>
        <name>1</name>
        <sequence type="displayed"/>
    </isoform>
    <isoform>
        <id>Q6P5X5-2</id>
        <name>2</name>
        <sequence type="described" ref="VSP_046502"/>
    </isoform>
</comment>
<comment type="PTM">
    <text evidence="1">Rapidly degraded by proteolysis following neuronal stimulation, resulting in increased AMPA receptor clustering.</text>
</comment>
<comment type="similarity">
    <text evidence="2">Belongs to the UPF0545 family.</text>
</comment>
<gene>
    <name type="primary">C22orf39</name>
</gene>
<keyword id="KW-0025">Alternative splicing</keyword>
<keyword id="KW-1267">Proteomics identification</keyword>
<keyword id="KW-1185">Reference proteome</keyword>
<keyword id="KW-0964">Secreted</keyword>
<keyword id="KW-0770">Synapse</keyword>
<dbReference type="EMBL" id="AK290073">
    <property type="protein sequence ID" value="BAF82762.1"/>
    <property type="molecule type" value="mRNA"/>
</dbReference>
<dbReference type="EMBL" id="AC000068">
    <property type="status" value="NOT_ANNOTATED_CDS"/>
    <property type="molecule type" value="Genomic_DNA"/>
</dbReference>
<dbReference type="EMBL" id="AC000079">
    <property type="status" value="NOT_ANNOTATED_CDS"/>
    <property type="molecule type" value="Genomic_DNA"/>
</dbReference>
<dbReference type="EMBL" id="AC000085">
    <property type="status" value="NOT_ANNOTATED_CDS"/>
    <property type="molecule type" value="Genomic_DNA"/>
</dbReference>
<dbReference type="EMBL" id="AC000092">
    <property type="status" value="NOT_ANNOTATED_CDS"/>
    <property type="molecule type" value="Genomic_DNA"/>
</dbReference>
<dbReference type="EMBL" id="KF457353">
    <property type="status" value="NOT_ANNOTATED_CDS"/>
    <property type="molecule type" value="Genomic_DNA"/>
</dbReference>
<dbReference type="EMBL" id="KF457354">
    <property type="status" value="NOT_ANNOTATED_CDS"/>
    <property type="molecule type" value="Genomic_DNA"/>
</dbReference>
<dbReference type="EMBL" id="CH471176">
    <property type="protein sequence ID" value="EAX03039.1"/>
    <property type="molecule type" value="Genomic_DNA"/>
</dbReference>
<dbReference type="EMBL" id="CH471176">
    <property type="protein sequence ID" value="EAX03040.1"/>
    <property type="molecule type" value="Genomic_DNA"/>
</dbReference>
<dbReference type="EMBL" id="CH471176">
    <property type="protein sequence ID" value="EAX03041.1"/>
    <property type="molecule type" value="Genomic_DNA"/>
</dbReference>
<dbReference type="EMBL" id="BC062599">
    <property type="protein sequence ID" value="AAH62599.1"/>
    <property type="molecule type" value="mRNA"/>
</dbReference>
<dbReference type="EMBL" id="CR456339">
    <property type="protein sequence ID" value="CAG30225.1"/>
    <property type="molecule type" value="mRNA"/>
</dbReference>
<dbReference type="CCDS" id="CCDS33599.3">
    <molecule id="Q6P5X5-1"/>
</dbReference>
<dbReference type="CCDS" id="CCDS54498.2">
    <molecule id="Q6P5X5-2"/>
</dbReference>
<dbReference type="RefSeq" id="NP_001159714.2">
    <molecule id="Q6P5X5-2"/>
    <property type="nucleotide sequence ID" value="NM_001166242.2"/>
</dbReference>
<dbReference type="RefSeq" id="NP_776154.4">
    <molecule id="Q6P5X5-1"/>
    <property type="nucleotide sequence ID" value="NM_173793.5"/>
</dbReference>
<dbReference type="BioGRID" id="126177">
    <property type="interactions" value="48"/>
</dbReference>
<dbReference type="FunCoup" id="Q6P5X5">
    <property type="interactions" value="160"/>
</dbReference>
<dbReference type="IntAct" id="Q6P5X5">
    <property type="interactions" value="50"/>
</dbReference>
<dbReference type="MINT" id="Q6P5X5"/>
<dbReference type="STRING" id="9606.ENSP00000382474"/>
<dbReference type="PhosphoSitePlus" id="Q6P5X5"/>
<dbReference type="BioMuta" id="C22orf39"/>
<dbReference type="DMDM" id="510120816"/>
<dbReference type="jPOST" id="Q6P5X5"/>
<dbReference type="MassIVE" id="Q6P5X5"/>
<dbReference type="PaxDb" id="9606-ENSP00000382474"/>
<dbReference type="PeptideAtlas" id="Q6P5X5"/>
<dbReference type="ProteomicsDB" id="67009">
    <molecule id="Q6P5X5-1"/>
</dbReference>
<dbReference type="Pumba" id="Q6P5X5"/>
<dbReference type="Antibodypedia" id="76439">
    <property type="antibodies" value="14 antibodies from 6 providers"/>
</dbReference>
<dbReference type="DNASU" id="128977"/>
<dbReference type="Ensembl" id="ENST00000399562.9">
    <molecule id="Q6P5X5-1"/>
    <property type="protein sequence ID" value="ENSP00000382474.5"/>
    <property type="gene ID" value="ENSG00000242259.9"/>
</dbReference>
<dbReference type="Ensembl" id="ENST00000399568.5">
    <molecule id="Q6P5X5-2"/>
    <property type="protein sequence ID" value="ENSP00000382478.1"/>
    <property type="gene ID" value="ENSG00000242259.9"/>
</dbReference>
<dbReference type="GeneID" id="128977"/>
<dbReference type="KEGG" id="hsa:128977"/>
<dbReference type="MANE-Select" id="ENST00000399562.9">
    <property type="protein sequence ID" value="ENSP00000382474.5"/>
    <property type="RefSeq nucleotide sequence ID" value="NM_173793.5"/>
    <property type="RefSeq protein sequence ID" value="NP_776154.4"/>
</dbReference>
<dbReference type="UCSC" id="uc002zpi.4">
    <molecule id="Q6P5X5-1"/>
    <property type="organism name" value="human"/>
</dbReference>
<dbReference type="AGR" id="HGNC:27012"/>
<dbReference type="CTD" id="128977"/>
<dbReference type="DisGeNET" id="128977"/>
<dbReference type="GeneCards" id="C22orf39"/>
<dbReference type="HGNC" id="HGNC:27012">
    <property type="gene designation" value="C22orf39"/>
</dbReference>
<dbReference type="HPA" id="ENSG00000242259">
    <property type="expression patterns" value="Tissue enhanced (skeletal)"/>
</dbReference>
<dbReference type="neXtProt" id="NX_Q6P5X5"/>
<dbReference type="OpenTargets" id="ENSG00000242259"/>
<dbReference type="PharmGKB" id="PA162378995"/>
<dbReference type="VEuPathDB" id="HostDB:ENSG00000242259"/>
<dbReference type="eggNOG" id="ENOG502S4W2">
    <property type="taxonomic scope" value="Eukaryota"/>
</dbReference>
<dbReference type="GeneTree" id="ENSGT00390000002511"/>
<dbReference type="HOGENOM" id="CLU_2164004_0_0_1"/>
<dbReference type="InParanoid" id="Q6P5X5"/>
<dbReference type="OMA" id="CHLYKDE"/>
<dbReference type="OrthoDB" id="5946508at2759"/>
<dbReference type="PAN-GO" id="Q6P5X5">
    <property type="GO annotations" value="0 GO annotations based on evolutionary models"/>
</dbReference>
<dbReference type="PhylomeDB" id="Q6P5X5"/>
<dbReference type="TreeFam" id="TF324380"/>
<dbReference type="PathwayCommons" id="Q6P5X5"/>
<dbReference type="SignaLink" id="Q6P5X5"/>
<dbReference type="BioGRID-ORCS" id="128977">
    <property type="hits" value="18 hits in 1129 CRISPR screens"/>
</dbReference>
<dbReference type="ChiTaRS" id="C22orf39">
    <property type="organism name" value="human"/>
</dbReference>
<dbReference type="GenomeRNAi" id="128977"/>
<dbReference type="Pharos" id="Q6P5X5">
    <property type="development level" value="Tdark"/>
</dbReference>
<dbReference type="PRO" id="PR:Q6P5X5"/>
<dbReference type="Proteomes" id="UP000005640">
    <property type="component" value="Chromosome 22"/>
</dbReference>
<dbReference type="RNAct" id="Q6P5X5">
    <property type="molecule type" value="protein"/>
</dbReference>
<dbReference type="Bgee" id="ENSG00000242259">
    <property type="expression patterns" value="Expressed in gastrocnemius and 181 other cell types or tissues"/>
</dbReference>
<dbReference type="ExpressionAtlas" id="Q6P5X5">
    <property type="expression patterns" value="baseline and differential"/>
</dbReference>
<dbReference type="GO" id="GO:0005739">
    <property type="term" value="C:mitochondrion"/>
    <property type="evidence" value="ECO:0006056"/>
    <property type="project" value="FlyBase"/>
</dbReference>
<dbReference type="GO" id="GO:0045202">
    <property type="term" value="C:synapse"/>
    <property type="evidence" value="ECO:0000250"/>
    <property type="project" value="UniProtKB"/>
</dbReference>
<dbReference type="GO" id="GO:0043083">
    <property type="term" value="C:synaptic cleft"/>
    <property type="evidence" value="ECO:0000250"/>
    <property type="project" value="UniProtKB"/>
</dbReference>
<dbReference type="GO" id="GO:1900272">
    <property type="term" value="P:negative regulation of long-term synaptic potentiation"/>
    <property type="evidence" value="ECO:0000250"/>
    <property type="project" value="UniProtKB"/>
</dbReference>
<dbReference type="GO" id="GO:0048167">
    <property type="term" value="P:regulation of synaptic plasticity"/>
    <property type="evidence" value="ECO:0000250"/>
    <property type="project" value="UniProtKB"/>
</dbReference>
<dbReference type="InterPro" id="IPR021475">
    <property type="entry name" value="Pants/Emi1-like"/>
</dbReference>
<dbReference type="PANTHER" id="PTHR28052">
    <property type="entry name" value="UPF0545 PROTEIN C22ORF39"/>
    <property type="match status" value="1"/>
</dbReference>
<dbReference type="PANTHER" id="PTHR28052:SF1">
    <property type="entry name" value="UPF0545 PROTEIN C22ORF39"/>
    <property type="match status" value="1"/>
</dbReference>
<dbReference type="Pfam" id="PF11326">
    <property type="entry name" value="PANTS-like"/>
    <property type="match status" value="1"/>
</dbReference>
<reference key="1">
    <citation type="journal article" date="2004" name="Nat. Genet.">
        <title>Complete sequencing and characterization of 21,243 full-length human cDNAs.</title>
        <authorList>
            <person name="Ota T."/>
            <person name="Suzuki Y."/>
            <person name="Nishikawa T."/>
            <person name="Otsuki T."/>
            <person name="Sugiyama T."/>
            <person name="Irie R."/>
            <person name="Wakamatsu A."/>
            <person name="Hayashi K."/>
            <person name="Sato H."/>
            <person name="Nagai K."/>
            <person name="Kimura K."/>
            <person name="Makita H."/>
            <person name="Sekine M."/>
            <person name="Obayashi M."/>
            <person name="Nishi T."/>
            <person name="Shibahara T."/>
            <person name="Tanaka T."/>
            <person name="Ishii S."/>
            <person name="Yamamoto J."/>
            <person name="Saito K."/>
            <person name="Kawai Y."/>
            <person name="Isono Y."/>
            <person name="Nakamura Y."/>
            <person name="Nagahari K."/>
            <person name="Murakami K."/>
            <person name="Yasuda T."/>
            <person name="Iwayanagi T."/>
            <person name="Wagatsuma M."/>
            <person name="Shiratori A."/>
            <person name="Sudo H."/>
            <person name="Hosoiri T."/>
            <person name="Kaku Y."/>
            <person name="Kodaira H."/>
            <person name="Kondo H."/>
            <person name="Sugawara M."/>
            <person name="Takahashi M."/>
            <person name="Kanda K."/>
            <person name="Yokoi T."/>
            <person name="Furuya T."/>
            <person name="Kikkawa E."/>
            <person name="Omura Y."/>
            <person name="Abe K."/>
            <person name="Kamihara K."/>
            <person name="Katsuta N."/>
            <person name="Sato K."/>
            <person name="Tanikawa M."/>
            <person name="Yamazaki M."/>
            <person name="Ninomiya K."/>
            <person name="Ishibashi T."/>
            <person name="Yamashita H."/>
            <person name="Murakawa K."/>
            <person name="Fujimori K."/>
            <person name="Tanai H."/>
            <person name="Kimata M."/>
            <person name="Watanabe M."/>
            <person name="Hiraoka S."/>
            <person name="Chiba Y."/>
            <person name="Ishida S."/>
            <person name="Ono Y."/>
            <person name="Takiguchi S."/>
            <person name="Watanabe S."/>
            <person name="Yosida M."/>
            <person name="Hotuta T."/>
            <person name="Kusano J."/>
            <person name="Kanehori K."/>
            <person name="Takahashi-Fujii A."/>
            <person name="Hara H."/>
            <person name="Tanase T.-O."/>
            <person name="Nomura Y."/>
            <person name="Togiya S."/>
            <person name="Komai F."/>
            <person name="Hara R."/>
            <person name="Takeuchi K."/>
            <person name="Arita M."/>
            <person name="Imose N."/>
            <person name="Musashino K."/>
            <person name="Yuuki H."/>
            <person name="Oshima A."/>
            <person name="Sasaki N."/>
            <person name="Aotsuka S."/>
            <person name="Yoshikawa Y."/>
            <person name="Matsunawa H."/>
            <person name="Ichihara T."/>
            <person name="Shiohata N."/>
            <person name="Sano S."/>
            <person name="Moriya S."/>
            <person name="Momiyama H."/>
            <person name="Satoh N."/>
            <person name="Takami S."/>
            <person name="Terashima Y."/>
            <person name="Suzuki O."/>
            <person name="Nakagawa S."/>
            <person name="Senoh A."/>
            <person name="Mizoguchi H."/>
            <person name="Goto Y."/>
            <person name="Shimizu F."/>
            <person name="Wakebe H."/>
            <person name="Hishigaki H."/>
            <person name="Watanabe T."/>
            <person name="Sugiyama A."/>
            <person name="Takemoto M."/>
            <person name="Kawakami B."/>
            <person name="Yamazaki M."/>
            <person name="Watanabe K."/>
            <person name="Kumagai A."/>
            <person name="Itakura S."/>
            <person name="Fukuzumi Y."/>
            <person name="Fujimori Y."/>
            <person name="Komiyama M."/>
            <person name="Tashiro H."/>
            <person name="Tanigami A."/>
            <person name="Fujiwara T."/>
            <person name="Ono T."/>
            <person name="Yamada K."/>
            <person name="Fujii Y."/>
            <person name="Ozaki K."/>
            <person name="Hirao M."/>
            <person name="Ohmori Y."/>
            <person name="Kawabata A."/>
            <person name="Hikiji T."/>
            <person name="Kobatake N."/>
            <person name="Inagaki H."/>
            <person name="Ikema Y."/>
            <person name="Okamoto S."/>
            <person name="Okitani R."/>
            <person name="Kawakami T."/>
            <person name="Noguchi S."/>
            <person name="Itoh T."/>
            <person name="Shigeta K."/>
            <person name="Senba T."/>
            <person name="Matsumura K."/>
            <person name="Nakajima Y."/>
            <person name="Mizuno T."/>
            <person name="Morinaga M."/>
            <person name="Sasaki M."/>
            <person name="Togashi T."/>
            <person name="Oyama M."/>
            <person name="Hata H."/>
            <person name="Watanabe M."/>
            <person name="Komatsu T."/>
            <person name="Mizushima-Sugano J."/>
            <person name="Satoh T."/>
            <person name="Shirai Y."/>
            <person name="Takahashi Y."/>
            <person name="Nakagawa K."/>
            <person name="Okumura K."/>
            <person name="Nagase T."/>
            <person name="Nomura N."/>
            <person name="Kikuchi H."/>
            <person name="Masuho Y."/>
            <person name="Yamashita R."/>
            <person name="Nakai K."/>
            <person name="Yada T."/>
            <person name="Nakamura Y."/>
            <person name="Ohara O."/>
            <person name="Isogai T."/>
            <person name="Sugano S."/>
        </authorList>
    </citation>
    <scope>NUCLEOTIDE SEQUENCE [LARGE SCALE MRNA] (ISOFORM 1)</scope>
    <source>
        <tissue>Substantia nigra</tissue>
    </source>
</reference>
<reference key="2">
    <citation type="journal article" date="1999" name="Nature">
        <title>The DNA sequence of human chromosome 22.</title>
        <authorList>
            <person name="Dunham I."/>
            <person name="Hunt A.R."/>
            <person name="Collins J.E."/>
            <person name="Bruskiewich R."/>
            <person name="Beare D.M."/>
            <person name="Clamp M."/>
            <person name="Smink L.J."/>
            <person name="Ainscough R."/>
            <person name="Almeida J.P."/>
            <person name="Babbage A.K."/>
            <person name="Bagguley C."/>
            <person name="Bailey J."/>
            <person name="Barlow K.F."/>
            <person name="Bates K.N."/>
            <person name="Beasley O.P."/>
            <person name="Bird C.P."/>
            <person name="Blakey S.E."/>
            <person name="Bridgeman A.M."/>
            <person name="Buck D."/>
            <person name="Burgess J."/>
            <person name="Burrill W.D."/>
            <person name="Burton J."/>
            <person name="Carder C."/>
            <person name="Carter N.P."/>
            <person name="Chen Y."/>
            <person name="Clark G."/>
            <person name="Clegg S.M."/>
            <person name="Cobley V.E."/>
            <person name="Cole C.G."/>
            <person name="Collier R.E."/>
            <person name="Connor R."/>
            <person name="Conroy D."/>
            <person name="Corby N.R."/>
            <person name="Coville G.J."/>
            <person name="Cox A.V."/>
            <person name="Davis J."/>
            <person name="Dawson E."/>
            <person name="Dhami P.D."/>
            <person name="Dockree C."/>
            <person name="Dodsworth S.J."/>
            <person name="Durbin R.M."/>
            <person name="Ellington A.G."/>
            <person name="Evans K.L."/>
            <person name="Fey J.M."/>
            <person name="Fleming K."/>
            <person name="French L."/>
            <person name="Garner A.A."/>
            <person name="Gilbert J.G.R."/>
            <person name="Goward M.E."/>
            <person name="Grafham D.V."/>
            <person name="Griffiths M.N.D."/>
            <person name="Hall C."/>
            <person name="Hall R.E."/>
            <person name="Hall-Tamlyn G."/>
            <person name="Heathcott R.W."/>
            <person name="Ho S."/>
            <person name="Holmes S."/>
            <person name="Hunt S.E."/>
            <person name="Jones M.C."/>
            <person name="Kershaw J."/>
            <person name="Kimberley A.M."/>
            <person name="King A."/>
            <person name="Laird G.K."/>
            <person name="Langford C.F."/>
            <person name="Leversha M.A."/>
            <person name="Lloyd C."/>
            <person name="Lloyd D.M."/>
            <person name="Martyn I.D."/>
            <person name="Mashreghi-Mohammadi M."/>
            <person name="Matthews L.H."/>
            <person name="Mccann O.T."/>
            <person name="Mcclay J."/>
            <person name="Mclaren S."/>
            <person name="McMurray A.A."/>
            <person name="Milne S.A."/>
            <person name="Mortimore B.J."/>
            <person name="Odell C.N."/>
            <person name="Pavitt R."/>
            <person name="Pearce A.V."/>
            <person name="Pearson D."/>
            <person name="Phillimore B.J.C.T."/>
            <person name="Phillips S.H."/>
            <person name="Plumb R.W."/>
            <person name="Ramsay H."/>
            <person name="Ramsey Y."/>
            <person name="Rogers L."/>
            <person name="Ross M.T."/>
            <person name="Scott C.E."/>
            <person name="Sehra H.K."/>
            <person name="Skuce C.D."/>
            <person name="Smalley S."/>
            <person name="Smith M.L."/>
            <person name="Soderlund C."/>
            <person name="Spragon L."/>
            <person name="Steward C.A."/>
            <person name="Sulston J.E."/>
            <person name="Swann R.M."/>
            <person name="Vaudin M."/>
            <person name="Wall M."/>
            <person name="Wallis J.M."/>
            <person name="Whiteley M.N."/>
            <person name="Willey D.L."/>
            <person name="Williams L."/>
            <person name="Williams S.A."/>
            <person name="Williamson H."/>
            <person name="Wilmer T.E."/>
            <person name="Wilming L."/>
            <person name="Wright C.L."/>
            <person name="Hubbard T."/>
            <person name="Bentley D.R."/>
            <person name="Beck S."/>
            <person name="Rogers J."/>
            <person name="Shimizu N."/>
            <person name="Minoshima S."/>
            <person name="Kawasaki K."/>
            <person name="Sasaki T."/>
            <person name="Asakawa S."/>
            <person name="Kudoh J."/>
            <person name="Shintani A."/>
            <person name="Shibuya K."/>
            <person name="Yoshizaki Y."/>
            <person name="Aoki N."/>
            <person name="Mitsuyama S."/>
            <person name="Roe B.A."/>
            <person name="Chen F."/>
            <person name="Chu L."/>
            <person name="Crabtree J."/>
            <person name="Deschamps S."/>
            <person name="Do A."/>
            <person name="Do T."/>
            <person name="Dorman A."/>
            <person name="Fang F."/>
            <person name="Fu Y."/>
            <person name="Hu P."/>
            <person name="Hua A."/>
            <person name="Kenton S."/>
            <person name="Lai H."/>
            <person name="Lao H.I."/>
            <person name="Lewis J."/>
            <person name="Lewis S."/>
            <person name="Lin S.-P."/>
            <person name="Loh P."/>
            <person name="Malaj E."/>
            <person name="Nguyen T."/>
            <person name="Pan H."/>
            <person name="Phan S."/>
            <person name="Qi S."/>
            <person name="Qian Y."/>
            <person name="Ray L."/>
            <person name="Ren Q."/>
            <person name="Shaull S."/>
            <person name="Sloan D."/>
            <person name="Song L."/>
            <person name="Wang Q."/>
            <person name="Wang Y."/>
            <person name="Wang Z."/>
            <person name="White J."/>
            <person name="Willingham D."/>
            <person name="Wu H."/>
            <person name="Yao Z."/>
            <person name="Zhan M."/>
            <person name="Zhang G."/>
            <person name="Chissoe S."/>
            <person name="Murray J."/>
            <person name="Miller N."/>
            <person name="Minx P."/>
            <person name="Fulton R."/>
            <person name="Johnson D."/>
            <person name="Bemis G."/>
            <person name="Bentley D."/>
            <person name="Bradshaw H."/>
            <person name="Bourne S."/>
            <person name="Cordes M."/>
            <person name="Du Z."/>
            <person name="Fulton L."/>
            <person name="Goela D."/>
            <person name="Graves T."/>
            <person name="Hawkins J."/>
            <person name="Hinds K."/>
            <person name="Kemp K."/>
            <person name="Latreille P."/>
            <person name="Layman D."/>
            <person name="Ozersky P."/>
            <person name="Rohlfing T."/>
            <person name="Scheet P."/>
            <person name="Walker C."/>
            <person name="Wamsley A."/>
            <person name="Wohldmann P."/>
            <person name="Pepin K."/>
            <person name="Nelson J."/>
            <person name="Korf I."/>
            <person name="Bedell J.A."/>
            <person name="Hillier L.W."/>
            <person name="Mardis E."/>
            <person name="Waterston R."/>
            <person name="Wilson R."/>
            <person name="Emanuel B.S."/>
            <person name="Shaikh T."/>
            <person name="Kurahashi H."/>
            <person name="Saitta S."/>
            <person name="Budarf M.L."/>
            <person name="McDermid H.E."/>
            <person name="Johnson A."/>
            <person name="Wong A.C.C."/>
            <person name="Morrow B.E."/>
            <person name="Edelmann L."/>
            <person name="Kim U.J."/>
            <person name="Shizuya H."/>
            <person name="Simon M.I."/>
            <person name="Dumanski J.P."/>
            <person name="Peyrard M."/>
            <person name="Kedra D."/>
            <person name="Seroussi E."/>
            <person name="Fransson I."/>
            <person name="Tapia I."/>
            <person name="Bruder C.E."/>
            <person name="O'Brien K.P."/>
            <person name="Wilkinson P."/>
            <person name="Bodenteich A."/>
            <person name="Hartman K."/>
            <person name="Hu X."/>
            <person name="Khan A.S."/>
            <person name="Lane L."/>
            <person name="Tilahun Y."/>
            <person name="Wright H."/>
        </authorList>
    </citation>
    <scope>NUCLEOTIDE SEQUENCE [LARGE SCALE GENOMIC DNA]</scope>
</reference>
<reference key="3">
    <citation type="submission" date="2005-09" db="EMBL/GenBank/DDBJ databases">
        <authorList>
            <person name="Mural R.J."/>
            <person name="Istrail S."/>
            <person name="Sutton G.G."/>
            <person name="Florea L."/>
            <person name="Halpern A.L."/>
            <person name="Mobarry C.M."/>
            <person name="Lippert R."/>
            <person name="Walenz B."/>
            <person name="Shatkay H."/>
            <person name="Dew I."/>
            <person name="Miller J.R."/>
            <person name="Flanigan M.J."/>
            <person name="Edwards N.J."/>
            <person name="Bolanos R."/>
            <person name="Fasulo D."/>
            <person name="Halldorsson B.V."/>
            <person name="Hannenhalli S."/>
            <person name="Turner R."/>
            <person name="Yooseph S."/>
            <person name="Lu F."/>
            <person name="Nusskern D.R."/>
            <person name="Shue B.C."/>
            <person name="Zheng X.H."/>
            <person name="Zhong F."/>
            <person name="Delcher A.L."/>
            <person name="Huson D.H."/>
            <person name="Kravitz S.A."/>
            <person name="Mouchard L."/>
            <person name="Reinert K."/>
            <person name="Remington K.A."/>
            <person name="Clark A.G."/>
            <person name="Waterman M.S."/>
            <person name="Eichler E.E."/>
            <person name="Adams M.D."/>
            <person name="Hunkapiller M.W."/>
            <person name="Myers E.W."/>
            <person name="Venter J.C."/>
        </authorList>
    </citation>
    <scope>NUCLEOTIDE SEQUENCE [LARGE SCALE GENOMIC DNA]</scope>
</reference>
<reference key="4">
    <citation type="journal article" date="2004" name="Genome Res.">
        <title>The status, quality, and expansion of the NIH full-length cDNA project: the Mammalian Gene Collection (MGC).</title>
        <authorList>
            <consortium name="The MGC Project Team"/>
        </authorList>
    </citation>
    <scope>NUCLEOTIDE SEQUENCE [LARGE SCALE MRNA] (ISOFORM 1)</scope>
    <source>
        <tissue>Brain</tissue>
    </source>
</reference>
<reference key="5">
    <citation type="journal article" date="2004" name="Genome Biol.">
        <title>A genome annotation-driven approach to cloning the human ORFeome.</title>
        <authorList>
            <person name="Collins J.E."/>
            <person name="Wright C.L."/>
            <person name="Edwards C.A."/>
            <person name="Davis M.P."/>
            <person name="Grinham J.A."/>
            <person name="Cole C.G."/>
            <person name="Goward M.E."/>
            <person name="Aguado B."/>
            <person name="Mallya M."/>
            <person name="Mokrab Y."/>
            <person name="Huckle E.J."/>
            <person name="Beare D.M."/>
            <person name="Dunham I."/>
        </authorList>
    </citation>
    <scope>NUCLEOTIDE SEQUENCE [LARGE SCALE MRNA] (ISOFORM 1)</scope>
</reference>
<feature type="chain" id="PRO_0000326130" description="Synaptic plasticity regulator PANTS">
    <location>
        <begin position="1"/>
        <end position="105"/>
    </location>
</feature>
<feature type="splice variant" id="VSP_046502" description="In isoform 2." evidence="2">
    <original>QSLCESERARVRAARKHILVWAPRQSPPPDWHLPLPQEKDE</original>
    <variation>VLSVVAHTCNLSYLGG</variation>
    <location>
        <begin position="65"/>
        <end position="105"/>
    </location>
</feature>
<sequence length="105" mass="12540">MADGSGWQPPRPCEAYRAEWKLCRSARHFLHHYYVHGERPACEQWQRDLASCRDWEERRNAEAQQSLCESERARVRAARKHILVWAPRQSPPPDWHLPLPQEKDE</sequence>
<name>CV039_HUMAN</name>
<proteinExistence type="evidence at protein level"/>
<organism>
    <name type="scientific">Homo sapiens</name>
    <name type="common">Human</name>
    <dbReference type="NCBI Taxonomy" id="9606"/>
    <lineage>
        <taxon>Eukaryota</taxon>
        <taxon>Metazoa</taxon>
        <taxon>Chordata</taxon>
        <taxon>Craniata</taxon>
        <taxon>Vertebrata</taxon>
        <taxon>Euteleostomi</taxon>
        <taxon>Mammalia</taxon>
        <taxon>Eutheria</taxon>
        <taxon>Euarchontoglires</taxon>
        <taxon>Primates</taxon>
        <taxon>Haplorrhini</taxon>
        <taxon>Catarrhini</taxon>
        <taxon>Hominidae</taxon>
        <taxon>Homo</taxon>
    </lineage>
</organism>
<protein>
    <recommendedName>
        <fullName evidence="1">Synaptic plasticity regulator PANTS</fullName>
    </recommendedName>
    <alternativeName>
        <fullName evidence="1">Plasticity-associated neural transcript short</fullName>
    </alternativeName>
</protein>
<evidence type="ECO:0000250" key="1">
    <source>
        <dbReference type="UniProtKB" id="Q3U595"/>
    </source>
</evidence>
<evidence type="ECO:0000305" key="2"/>
<accession>Q6P5X5</accession>
<accession>A0A075B6P1</accession>
<accession>A8MTW6</accession>
<accession>D3DX18</accession>
<accession>F5H3A8</accession>
<accession>J3KNP9</accession>